<dbReference type="EC" id="1.4.3.16" evidence="2"/>
<dbReference type="RefSeq" id="XP_016450537.1">
    <property type="nucleotide sequence ID" value="XM_016595051.1"/>
</dbReference>
<dbReference type="RefSeq" id="XP_016450538.1">
    <property type="nucleotide sequence ID" value="XM_016595052.1"/>
</dbReference>
<dbReference type="RefSeq" id="XP_016450539.1">
    <property type="nucleotide sequence ID" value="XM_016595053.1"/>
</dbReference>
<dbReference type="RefSeq" id="XP_016450540.1">
    <property type="nucleotide sequence ID" value="XM_016595054.1"/>
</dbReference>
<dbReference type="SMR" id="A0A1S3YEG8"/>
<dbReference type="STRING" id="4097.A0A1S3YEG8"/>
<dbReference type="PaxDb" id="4097-A0A1S3YEG8"/>
<dbReference type="GeneID" id="107775324"/>
<dbReference type="KEGG" id="nta:107775324"/>
<dbReference type="OMA" id="HCVQWLI"/>
<dbReference type="OrthoDB" id="71672at2759"/>
<dbReference type="UniPathway" id="UPA00107"/>
<dbReference type="UniPathway" id="UPA00253">
    <property type="reaction ID" value="UER00326"/>
</dbReference>
<dbReference type="Proteomes" id="UP000084051">
    <property type="component" value="Unplaced"/>
</dbReference>
<dbReference type="GO" id="GO:0009507">
    <property type="term" value="C:chloroplast"/>
    <property type="evidence" value="ECO:0007669"/>
    <property type="project" value="UniProtKB-SubCell"/>
</dbReference>
<dbReference type="GO" id="GO:0008734">
    <property type="term" value="F:L-aspartate oxidase activity"/>
    <property type="evidence" value="ECO:0007669"/>
    <property type="project" value="UniProtKB-EC"/>
</dbReference>
<dbReference type="GO" id="GO:0009820">
    <property type="term" value="P:alkaloid metabolic process"/>
    <property type="evidence" value="ECO:0007669"/>
    <property type="project" value="UniProtKB-KW"/>
</dbReference>
<dbReference type="GO" id="GO:0009435">
    <property type="term" value="P:NAD biosynthetic process"/>
    <property type="evidence" value="ECO:0007669"/>
    <property type="project" value="UniProtKB-UniPathway"/>
</dbReference>
<dbReference type="GO" id="GO:0042179">
    <property type="term" value="P:nicotine biosynthetic process"/>
    <property type="evidence" value="ECO:0007669"/>
    <property type="project" value="UniProtKB-UniPathway"/>
</dbReference>
<dbReference type="FunFam" id="3.90.700.10:FF:000002">
    <property type="entry name" value="L-aspartate oxidase"/>
    <property type="match status" value="1"/>
</dbReference>
<dbReference type="Gene3D" id="3.50.50.60">
    <property type="entry name" value="FAD/NAD(P)-binding domain"/>
    <property type="match status" value="1"/>
</dbReference>
<dbReference type="Gene3D" id="1.20.58.100">
    <property type="entry name" value="Fumarate reductase/succinate dehydrogenase flavoprotein-like, C-terminal domain"/>
    <property type="match status" value="1"/>
</dbReference>
<dbReference type="Gene3D" id="3.90.700.10">
    <property type="entry name" value="Succinate dehydrogenase/fumarate reductase flavoprotein, catalytic domain"/>
    <property type="match status" value="1"/>
</dbReference>
<dbReference type="InterPro" id="IPR003953">
    <property type="entry name" value="FAD-dep_OxRdtase_2_FAD-bd"/>
</dbReference>
<dbReference type="InterPro" id="IPR036188">
    <property type="entry name" value="FAD/NAD-bd_sf"/>
</dbReference>
<dbReference type="InterPro" id="IPR037099">
    <property type="entry name" value="Fum_R/Succ_DH_flav-like_C_sf"/>
</dbReference>
<dbReference type="InterPro" id="IPR015939">
    <property type="entry name" value="Fum_Rdtase/Succ_DH_flav-like_C"/>
</dbReference>
<dbReference type="InterPro" id="IPR005288">
    <property type="entry name" value="NadB"/>
</dbReference>
<dbReference type="InterPro" id="IPR027477">
    <property type="entry name" value="Succ_DH/fumarate_Rdtase_cat_sf"/>
</dbReference>
<dbReference type="NCBIfam" id="TIGR00551">
    <property type="entry name" value="nadB"/>
    <property type="match status" value="1"/>
</dbReference>
<dbReference type="PANTHER" id="PTHR42716">
    <property type="entry name" value="L-ASPARTATE OXIDASE"/>
    <property type="match status" value="1"/>
</dbReference>
<dbReference type="PANTHER" id="PTHR42716:SF2">
    <property type="entry name" value="L-ASPARTATE OXIDASE, CHLOROPLASTIC"/>
    <property type="match status" value="1"/>
</dbReference>
<dbReference type="Pfam" id="PF00890">
    <property type="entry name" value="FAD_binding_2"/>
    <property type="match status" value="1"/>
</dbReference>
<dbReference type="Pfam" id="PF02910">
    <property type="entry name" value="Succ_DH_flav_C"/>
    <property type="match status" value="1"/>
</dbReference>
<dbReference type="PRINTS" id="PR00368">
    <property type="entry name" value="FADPNR"/>
</dbReference>
<dbReference type="SUPFAM" id="SSF51905">
    <property type="entry name" value="FAD/NAD(P)-binding domain"/>
    <property type="match status" value="1"/>
</dbReference>
<dbReference type="SUPFAM" id="SSF46977">
    <property type="entry name" value="Succinate dehydrogenase/fumarate reductase flavoprotein C-terminal domain"/>
    <property type="match status" value="1"/>
</dbReference>
<dbReference type="SUPFAM" id="SSF56425">
    <property type="entry name" value="Succinate dehydrogenase/fumarate reductase flavoprotein, catalytic domain"/>
    <property type="match status" value="1"/>
</dbReference>
<name>AO2A_TOBAC</name>
<sequence>MATGIASGSGQLHLRKPVYWRSSYGKAHCHSNAILNGMQNQIPWSYWVSKFLRVHRSNYSQCQVKTNWKSHTGTINSCQRDGSTRYFDFAVIGSGIAGLRYALEVAKHGTVAVITKAEPHESNTNYAQGGVSAVFCPMDSVESHMQDTIVAGAYLCDEETVRVVCTEGPERIRELIAMGASFDHGEDGNLHLAREGGHSHRRIVHAADMTGREIERALLEAVFKHPNIHVFQHHFAIDFLTTQDGSDIICHGVDAINTETQEVIRFISKVTLLASGGAGHIYPSTTNPPVATGDGMAMAHRAQAVISNMEFVQFHPTALADEGLPNRPSARENAFLITEAVRGDGGILYNLDMERFMPMYDKRAELAPRDVVARSIDDQLKKRGEKYVLLDISHKPREKVLSHFPNIAAECLRHGLDITQQPIPVVPAAHYMCGGVRAGLEGETNVQGLYVAGEVACTGLHGANRLASNSLLEALVFARRAVQPSIDHVNVSRIDHCASSWWPRPVAPVVIGDTVLNKVIRRTREVRKELQSIMWEYVGIVRSTSRLTAAEKRINELELEWETYLFQHGWEPTMVGLEACEMRNLFCCANLVVSSALSRHESRGLHYTIDFPHVVESKRLPTIIFPSQRNSSWSSRQLHRQQIC</sequence>
<proteinExistence type="inferred from homology"/>
<comment type="function">
    <text evidence="2 4">Involved in the biosynthesis of pyridine alkaloid natural products, leading mainly to the production of anabasine, anatabine, nicotine and nornicotine, effective deterrents against herbivores with antiparasitic and pesticide properties (neurotoxins); nornicotine serves as the precursor in the synthesis of the carcinogen compound N'-nitrosonornicotine (NNN) (PubMed:32242247). Catalyzes the oxidation of L-aspartate to iminoaspartate (By similarity).</text>
</comment>
<comment type="catalytic activity">
    <reaction evidence="2">
        <text>L-aspartate + O2 = iminosuccinate + H2O2</text>
        <dbReference type="Rhea" id="RHEA:25876"/>
        <dbReference type="ChEBI" id="CHEBI:15379"/>
        <dbReference type="ChEBI" id="CHEBI:16240"/>
        <dbReference type="ChEBI" id="CHEBI:29991"/>
        <dbReference type="ChEBI" id="CHEBI:77875"/>
        <dbReference type="EC" id="1.4.3.16"/>
    </reaction>
</comment>
<comment type="cofactor">
    <cofactor evidence="1">
        <name>FAD</name>
        <dbReference type="ChEBI" id="CHEBI:57692"/>
    </cofactor>
    <text evidence="1">Binds 1 FAD per subunit.</text>
</comment>
<comment type="pathway">
    <text evidence="4">Alkaloid biosynthesis; nicotine biosynthesis.</text>
</comment>
<comment type="pathway">
    <text evidence="2">Cofactor biosynthesis; NAD(+) biosynthesis; iminoaspartate from L-aspartate (oxidase route): step 1/1.</text>
</comment>
<comment type="subcellular location">
    <subcellularLocation>
        <location evidence="3">Plastid</location>
        <location evidence="3">Chloroplast</location>
    </subcellularLocation>
</comment>
<comment type="disruption phenotype">
    <text evidence="4">Reduced alkaloids and nicotin levels associated with a lower putrescine production (PubMed:32242247). Occasionally, an early senescence and a lower viability of the older leaves is observed (PubMed:32242247).</text>
</comment>
<comment type="similarity">
    <text evidence="6">Belongs to the FAD-dependent oxidoreductase 2 family. NadB subfamily.</text>
</comment>
<reference key="1">
    <citation type="journal article" date="2014" name="Nat. Commun.">
        <title>The tobacco genome sequence and its comparison with those of tomato and potato.</title>
        <authorList>
            <person name="Sierro N."/>
            <person name="Battey J.N."/>
            <person name="Ouadi S."/>
            <person name="Bakaher N."/>
            <person name="Bovet L."/>
            <person name="Willig A."/>
            <person name="Goepfert S."/>
            <person name="Peitsch M.C."/>
            <person name="Ivanov N.V."/>
        </authorList>
    </citation>
    <scope>NUCLEOTIDE SEQUENCE [LARGE SCALE GENOMIC DNA]</scope>
    <source>
        <strain>cv. TN90</strain>
    </source>
</reference>
<reference key="2">
    <citation type="journal article" date="2013" name="Phytochemistry">
        <title>Molecular genetics of alkaloid biosynthesis in Nicotiana tabacum.</title>
        <authorList>
            <person name="Dewey R.E."/>
            <person name="Xie J."/>
        </authorList>
    </citation>
    <scope>REVIEW ON ALKALOID BIOSYNTHESIS IN NICOTIANA TABACUM</scope>
</reference>
<reference key="3">
    <citation type="journal article" date="2015" name="Mol. Genet. Genomics">
        <title>Current status and prospects for the study of Nicotiana genomics, genetics, and nicotine biosynthesis genes.</title>
        <authorList>
            <person name="Wang X."/>
            <person name="Bennetzen J.L."/>
        </authorList>
    </citation>
    <scope>REVIEW ON NICOTINE BIOSYNTHESIS</scope>
</reference>
<reference key="4">
    <citation type="journal article" date="2020" name="Planta">
        <title>Genetic attenuation of alkaloids and nicotine content in tobacco (Nicotiana tabacum).</title>
        <authorList>
            <person name="Hidalgo Martinez D."/>
            <person name="Payyavula R.S."/>
            <person name="Kudithipudi C."/>
            <person name="Shen Y."/>
            <person name="Xu D."/>
            <person name="Warek U."/>
            <person name="Strickland J.A."/>
            <person name="Melis A."/>
        </authorList>
    </citation>
    <scope>FUNCTION</scope>
    <scope>DISRUPTION PHENOTYPE</scope>
    <scope>PATHWAY</scope>
    <source>
        <strain>cv. K326-ALCS3</strain>
    </source>
</reference>
<gene>
    <name evidence="5" type="primary">AO-2A</name>
    <name evidence="7 8 9 10" type="ORF">LOC107775324</name>
</gene>
<organism>
    <name type="scientific">Nicotiana tabacum</name>
    <name type="common">Common tobacco</name>
    <dbReference type="NCBI Taxonomy" id="4097"/>
    <lineage>
        <taxon>Eukaryota</taxon>
        <taxon>Viridiplantae</taxon>
        <taxon>Streptophyta</taxon>
        <taxon>Embryophyta</taxon>
        <taxon>Tracheophyta</taxon>
        <taxon>Spermatophyta</taxon>
        <taxon>Magnoliopsida</taxon>
        <taxon>eudicotyledons</taxon>
        <taxon>Gunneridae</taxon>
        <taxon>Pentapetalae</taxon>
        <taxon>asterids</taxon>
        <taxon>lamiids</taxon>
        <taxon>Solanales</taxon>
        <taxon>Solanaceae</taxon>
        <taxon>Nicotianoideae</taxon>
        <taxon>Nicotianeae</taxon>
        <taxon>Nicotiana</taxon>
    </lineage>
</organism>
<keyword id="KW-0017">Alkaloid metabolism</keyword>
<keyword id="KW-0150">Chloroplast</keyword>
<keyword id="KW-0274">FAD</keyword>
<keyword id="KW-0285">Flavoprotein</keyword>
<keyword id="KW-0560">Oxidoreductase</keyword>
<keyword id="KW-0934">Plastid</keyword>
<keyword id="KW-0662">Pyridine nucleotide biosynthesis</keyword>
<keyword id="KW-1185">Reference proteome</keyword>
<keyword id="KW-0809">Transit peptide</keyword>
<evidence type="ECO:0000250" key="1">
    <source>
        <dbReference type="UniProtKB" id="P10902"/>
    </source>
</evidence>
<evidence type="ECO:0000250" key="2">
    <source>
        <dbReference type="UniProtKB" id="Q94AY1"/>
    </source>
</evidence>
<evidence type="ECO:0000255" key="3"/>
<evidence type="ECO:0000269" key="4">
    <source>
    </source>
</evidence>
<evidence type="ECO:0000303" key="5">
    <source>
    </source>
</evidence>
<evidence type="ECO:0000305" key="6"/>
<evidence type="ECO:0000312" key="7">
    <source>
        <dbReference type="RefSeq" id="XP_016450537.1"/>
    </source>
</evidence>
<evidence type="ECO:0000312" key="8">
    <source>
        <dbReference type="RefSeq" id="XP_016450538.1"/>
    </source>
</evidence>
<evidence type="ECO:0000312" key="9">
    <source>
        <dbReference type="RefSeq" id="XP_016450539.1"/>
    </source>
</evidence>
<evidence type="ECO:0000312" key="10">
    <source>
        <dbReference type="RefSeq" id="XP_016450540.1"/>
    </source>
</evidence>
<feature type="transit peptide" description="Chloroplast" evidence="3">
    <location>
        <begin position="1"/>
        <end status="unknown"/>
    </location>
</feature>
<feature type="chain" id="PRO_0000455773" description="L-aspartate oxidase 2-a, chloroplastic">
    <location>
        <begin status="unknown"/>
        <end position="644"/>
    </location>
</feature>
<feature type="active site" description="Proton donor/acceptor" evidence="1">
    <location>
        <position position="369"/>
    </location>
</feature>
<feature type="binding site" evidence="1">
    <location>
        <begin position="94"/>
        <end position="97"/>
    </location>
    <ligand>
        <name>FAD</name>
        <dbReference type="ChEBI" id="CHEBI:57692"/>
    </ligand>
</feature>
<feature type="binding site" evidence="1">
    <location>
        <position position="116"/>
    </location>
    <ligand>
        <name>FAD</name>
        <dbReference type="ChEBI" id="CHEBI:57692"/>
    </ligand>
</feature>
<feature type="binding site" evidence="1">
    <location>
        <begin position="123"/>
        <end position="130"/>
    </location>
    <ligand>
        <name>FAD</name>
        <dbReference type="ChEBI" id="CHEBI:57692"/>
    </ligand>
</feature>
<feature type="binding site" evidence="1">
    <location>
        <position position="294"/>
    </location>
    <ligand>
        <name>FAD</name>
        <dbReference type="ChEBI" id="CHEBI:57692"/>
    </ligand>
</feature>
<feature type="binding site" evidence="1">
    <location>
        <position position="454"/>
    </location>
    <ligand>
        <name>FAD</name>
        <dbReference type="ChEBI" id="CHEBI:57692"/>
    </ligand>
</feature>
<feature type="binding site" evidence="1">
    <location>
        <begin position="470"/>
        <end position="471"/>
    </location>
    <ligand>
        <name>FAD</name>
        <dbReference type="ChEBI" id="CHEBI:57692"/>
    </ligand>
</feature>
<feature type="site" description="Important in orienting the L-aspartate substrate" evidence="1">
    <location>
        <position position="195"/>
    </location>
</feature>
<protein>
    <recommendedName>
        <fullName evidence="5">L-aspartate oxidase 2-a, chloroplastic</fullName>
        <ecNumber evidence="2">1.4.3.16</ecNumber>
    </recommendedName>
</protein>
<accession>A0A1S3YEG8</accession>